<evidence type="ECO:0000255" key="1">
    <source>
        <dbReference type="HAMAP-Rule" id="MF_03137"/>
    </source>
</evidence>
<evidence type="ECO:0000256" key="2">
    <source>
        <dbReference type="SAM" id="MobiDB-lite"/>
    </source>
</evidence>
<evidence type="ECO:0000305" key="3"/>
<feature type="transit peptide" description="Mitochondrion" evidence="1">
    <location>
        <begin position="1"/>
        <end position="33"/>
    </location>
</feature>
<feature type="chain" id="PRO_0000402889" description="Translation factor GUF1, mitochondrial">
    <location>
        <begin position="34"/>
        <end position="674"/>
    </location>
</feature>
<feature type="domain" description="tr-type G">
    <location>
        <begin position="75"/>
        <end position="257"/>
    </location>
</feature>
<feature type="region of interest" description="Disordered" evidence="2">
    <location>
        <begin position="32"/>
        <end position="51"/>
    </location>
</feature>
<feature type="binding site" evidence="1">
    <location>
        <begin position="84"/>
        <end position="91"/>
    </location>
    <ligand>
        <name>GTP</name>
        <dbReference type="ChEBI" id="CHEBI:37565"/>
    </ligand>
</feature>
<feature type="binding site" evidence="1">
    <location>
        <begin position="150"/>
        <end position="154"/>
    </location>
    <ligand>
        <name>GTP</name>
        <dbReference type="ChEBI" id="CHEBI:37565"/>
    </ligand>
</feature>
<feature type="binding site" evidence="1">
    <location>
        <begin position="204"/>
        <end position="207"/>
    </location>
    <ligand>
        <name>GTP</name>
        <dbReference type="ChEBI" id="CHEBI:37565"/>
    </ligand>
</feature>
<keyword id="KW-0342">GTP-binding</keyword>
<keyword id="KW-0378">Hydrolase</keyword>
<keyword id="KW-0472">Membrane</keyword>
<keyword id="KW-0496">Mitochondrion</keyword>
<keyword id="KW-0999">Mitochondrion inner membrane</keyword>
<keyword id="KW-0547">Nucleotide-binding</keyword>
<keyword id="KW-0648">Protein biosynthesis</keyword>
<keyword id="KW-1185">Reference proteome</keyword>
<keyword id="KW-0809">Transit peptide</keyword>
<dbReference type="EC" id="3.6.5.-"/>
<dbReference type="EMBL" id="CH981525">
    <property type="protein sequence ID" value="EDK43695.1"/>
    <property type="molecule type" value="Genomic_DNA"/>
</dbReference>
<dbReference type="RefSeq" id="XP_001527045.1">
    <property type="nucleotide sequence ID" value="XM_001526995.1"/>
</dbReference>
<dbReference type="SMR" id="A5DWY7"/>
<dbReference type="FunCoup" id="A5DWY7">
    <property type="interactions" value="701"/>
</dbReference>
<dbReference type="STRING" id="379508.A5DWY7"/>
<dbReference type="GeneID" id="5233804"/>
<dbReference type="KEGG" id="lel:PVL30_001845"/>
<dbReference type="VEuPathDB" id="FungiDB:LELG_01874"/>
<dbReference type="eggNOG" id="KOG0462">
    <property type="taxonomic scope" value="Eukaryota"/>
</dbReference>
<dbReference type="HOGENOM" id="CLU_009995_3_1_1"/>
<dbReference type="InParanoid" id="A5DWY7"/>
<dbReference type="OMA" id="QVKCDEN"/>
<dbReference type="OrthoDB" id="1074at2759"/>
<dbReference type="Proteomes" id="UP000001996">
    <property type="component" value="Unassembled WGS sequence"/>
</dbReference>
<dbReference type="GO" id="GO:0005743">
    <property type="term" value="C:mitochondrial inner membrane"/>
    <property type="evidence" value="ECO:0007669"/>
    <property type="project" value="UniProtKB-SubCell"/>
</dbReference>
<dbReference type="GO" id="GO:0005759">
    <property type="term" value="C:mitochondrial matrix"/>
    <property type="evidence" value="ECO:0007669"/>
    <property type="project" value="UniProtKB-UniRule"/>
</dbReference>
<dbReference type="GO" id="GO:0005525">
    <property type="term" value="F:GTP binding"/>
    <property type="evidence" value="ECO:0007669"/>
    <property type="project" value="UniProtKB-UniRule"/>
</dbReference>
<dbReference type="GO" id="GO:0003924">
    <property type="term" value="F:GTPase activity"/>
    <property type="evidence" value="ECO:0007669"/>
    <property type="project" value="UniProtKB-UniRule"/>
</dbReference>
<dbReference type="GO" id="GO:0097177">
    <property type="term" value="F:mitochondrial ribosome binding"/>
    <property type="evidence" value="ECO:0007669"/>
    <property type="project" value="TreeGrafter"/>
</dbReference>
<dbReference type="GO" id="GO:0045727">
    <property type="term" value="P:positive regulation of translation"/>
    <property type="evidence" value="ECO:0007669"/>
    <property type="project" value="UniProtKB-UniRule"/>
</dbReference>
<dbReference type="GO" id="GO:0006412">
    <property type="term" value="P:translation"/>
    <property type="evidence" value="ECO:0007669"/>
    <property type="project" value="UniProtKB-KW"/>
</dbReference>
<dbReference type="CDD" id="cd01890">
    <property type="entry name" value="LepA"/>
    <property type="match status" value="1"/>
</dbReference>
<dbReference type="CDD" id="cd03709">
    <property type="entry name" value="lepA_C"/>
    <property type="match status" value="1"/>
</dbReference>
<dbReference type="FunFam" id="3.40.50.300:FF:000078">
    <property type="entry name" value="Elongation factor 4"/>
    <property type="match status" value="1"/>
</dbReference>
<dbReference type="FunFam" id="2.40.30.10:FF:000015">
    <property type="entry name" value="Translation factor GUF1, mitochondrial"/>
    <property type="match status" value="1"/>
</dbReference>
<dbReference type="FunFam" id="3.30.70.240:FF:000007">
    <property type="entry name" value="Translation factor GUF1, mitochondrial"/>
    <property type="match status" value="1"/>
</dbReference>
<dbReference type="FunFam" id="3.30.70.2570:FF:000001">
    <property type="entry name" value="Translation factor GUF1, mitochondrial"/>
    <property type="match status" value="1"/>
</dbReference>
<dbReference type="FunFam" id="3.30.70.870:FF:000004">
    <property type="entry name" value="Translation factor GUF1, mitochondrial"/>
    <property type="match status" value="1"/>
</dbReference>
<dbReference type="Gene3D" id="3.30.70.240">
    <property type="match status" value="1"/>
</dbReference>
<dbReference type="Gene3D" id="3.30.70.2570">
    <property type="entry name" value="Elongation factor 4, C-terminal domain"/>
    <property type="match status" value="1"/>
</dbReference>
<dbReference type="Gene3D" id="3.30.70.870">
    <property type="entry name" value="Elongation Factor G (Translational Gtpase), domain 3"/>
    <property type="match status" value="1"/>
</dbReference>
<dbReference type="Gene3D" id="3.40.50.300">
    <property type="entry name" value="P-loop containing nucleotide triphosphate hydrolases"/>
    <property type="match status" value="1"/>
</dbReference>
<dbReference type="Gene3D" id="2.40.30.10">
    <property type="entry name" value="Translation factors"/>
    <property type="match status" value="1"/>
</dbReference>
<dbReference type="HAMAP" id="MF_00071">
    <property type="entry name" value="LepA"/>
    <property type="match status" value="1"/>
</dbReference>
<dbReference type="InterPro" id="IPR006297">
    <property type="entry name" value="EF-4"/>
</dbReference>
<dbReference type="InterPro" id="IPR035647">
    <property type="entry name" value="EFG_III/V"/>
</dbReference>
<dbReference type="InterPro" id="IPR000640">
    <property type="entry name" value="EFG_V-like"/>
</dbReference>
<dbReference type="InterPro" id="IPR004161">
    <property type="entry name" value="EFTu-like_2"/>
</dbReference>
<dbReference type="InterPro" id="IPR031157">
    <property type="entry name" value="G_TR_CS"/>
</dbReference>
<dbReference type="InterPro" id="IPR038363">
    <property type="entry name" value="LepA_C_sf"/>
</dbReference>
<dbReference type="InterPro" id="IPR013842">
    <property type="entry name" value="LepA_CTD"/>
</dbReference>
<dbReference type="InterPro" id="IPR035654">
    <property type="entry name" value="LepA_IV"/>
</dbReference>
<dbReference type="InterPro" id="IPR027417">
    <property type="entry name" value="P-loop_NTPase"/>
</dbReference>
<dbReference type="InterPro" id="IPR005225">
    <property type="entry name" value="Small_GTP-bd"/>
</dbReference>
<dbReference type="InterPro" id="IPR000795">
    <property type="entry name" value="T_Tr_GTP-bd_dom"/>
</dbReference>
<dbReference type="InterPro" id="IPR009000">
    <property type="entry name" value="Transl_B-barrel_sf"/>
</dbReference>
<dbReference type="NCBIfam" id="TIGR01393">
    <property type="entry name" value="lepA"/>
    <property type="match status" value="1"/>
</dbReference>
<dbReference type="NCBIfam" id="TIGR00231">
    <property type="entry name" value="small_GTP"/>
    <property type="match status" value="1"/>
</dbReference>
<dbReference type="PANTHER" id="PTHR43512:SF7">
    <property type="entry name" value="TRANSLATION FACTOR GUF1, MITOCHONDRIAL"/>
    <property type="match status" value="1"/>
</dbReference>
<dbReference type="PANTHER" id="PTHR43512">
    <property type="entry name" value="TRANSLATION FACTOR GUF1-RELATED"/>
    <property type="match status" value="1"/>
</dbReference>
<dbReference type="Pfam" id="PF00679">
    <property type="entry name" value="EFG_C"/>
    <property type="match status" value="1"/>
</dbReference>
<dbReference type="Pfam" id="PF00009">
    <property type="entry name" value="GTP_EFTU"/>
    <property type="match status" value="1"/>
</dbReference>
<dbReference type="Pfam" id="PF03144">
    <property type="entry name" value="GTP_EFTU_D2"/>
    <property type="match status" value="1"/>
</dbReference>
<dbReference type="Pfam" id="PF06421">
    <property type="entry name" value="LepA_C"/>
    <property type="match status" value="1"/>
</dbReference>
<dbReference type="PRINTS" id="PR00315">
    <property type="entry name" value="ELONGATNFCT"/>
</dbReference>
<dbReference type="SUPFAM" id="SSF54980">
    <property type="entry name" value="EF-G C-terminal domain-like"/>
    <property type="match status" value="2"/>
</dbReference>
<dbReference type="SUPFAM" id="SSF52540">
    <property type="entry name" value="P-loop containing nucleoside triphosphate hydrolases"/>
    <property type="match status" value="1"/>
</dbReference>
<dbReference type="SUPFAM" id="SSF50447">
    <property type="entry name" value="Translation proteins"/>
    <property type="match status" value="1"/>
</dbReference>
<dbReference type="PROSITE" id="PS00301">
    <property type="entry name" value="G_TR_1"/>
    <property type="match status" value="1"/>
</dbReference>
<dbReference type="PROSITE" id="PS51722">
    <property type="entry name" value="G_TR_2"/>
    <property type="match status" value="1"/>
</dbReference>
<name>GUF1_LODEL</name>
<reference key="1">
    <citation type="journal article" date="2009" name="Nature">
        <title>Evolution of pathogenicity and sexual reproduction in eight Candida genomes.</title>
        <authorList>
            <person name="Butler G."/>
            <person name="Rasmussen M.D."/>
            <person name="Lin M.F."/>
            <person name="Santos M.A.S."/>
            <person name="Sakthikumar S."/>
            <person name="Munro C.A."/>
            <person name="Rheinbay E."/>
            <person name="Grabherr M."/>
            <person name="Forche A."/>
            <person name="Reedy J.L."/>
            <person name="Agrafioti I."/>
            <person name="Arnaud M.B."/>
            <person name="Bates S."/>
            <person name="Brown A.J.P."/>
            <person name="Brunke S."/>
            <person name="Costanzo M.C."/>
            <person name="Fitzpatrick D.A."/>
            <person name="de Groot P.W.J."/>
            <person name="Harris D."/>
            <person name="Hoyer L.L."/>
            <person name="Hube B."/>
            <person name="Klis F.M."/>
            <person name="Kodira C."/>
            <person name="Lennard N."/>
            <person name="Logue M.E."/>
            <person name="Martin R."/>
            <person name="Neiman A.M."/>
            <person name="Nikolaou E."/>
            <person name="Quail M.A."/>
            <person name="Quinn J."/>
            <person name="Santos M.C."/>
            <person name="Schmitzberger F.F."/>
            <person name="Sherlock G."/>
            <person name="Shah P."/>
            <person name="Silverstein K.A.T."/>
            <person name="Skrzypek M.S."/>
            <person name="Soll D."/>
            <person name="Staggs R."/>
            <person name="Stansfield I."/>
            <person name="Stumpf M.P.H."/>
            <person name="Sudbery P.E."/>
            <person name="Srikantha T."/>
            <person name="Zeng Q."/>
            <person name="Berman J."/>
            <person name="Berriman M."/>
            <person name="Heitman J."/>
            <person name="Gow N.A.R."/>
            <person name="Lorenz M.C."/>
            <person name="Birren B.W."/>
            <person name="Kellis M."/>
            <person name="Cuomo C.A."/>
        </authorList>
    </citation>
    <scope>NUCLEOTIDE SEQUENCE [LARGE SCALE GENOMIC DNA]</scope>
    <source>
        <strain>ATCC 11503 / BCRC 21390 / CBS 2605 / JCM 1781 / NBRC 1676 / NRRL YB-4239</strain>
    </source>
</reference>
<accession>A5DWY7</accession>
<organism>
    <name type="scientific">Lodderomyces elongisporus (strain ATCC 11503 / CBS 2605 / JCM 1781 / NBRC 1676 / NRRL YB-4239)</name>
    <name type="common">Yeast</name>
    <name type="synonym">Saccharomyces elongisporus</name>
    <dbReference type="NCBI Taxonomy" id="379508"/>
    <lineage>
        <taxon>Eukaryota</taxon>
        <taxon>Fungi</taxon>
        <taxon>Dikarya</taxon>
        <taxon>Ascomycota</taxon>
        <taxon>Saccharomycotina</taxon>
        <taxon>Pichiomycetes</taxon>
        <taxon>Debaryomycetaceae</taxon>
        <taxon>Candida/Lodderomyces clade</taxon>
        <taxon>Lodderomyces</taxon>
    </lineage>
</organism>
<sequence>MLRPWFCFRSCVSLLSNRRQYGFRYLATAEPSKSEKPAKPVKPAKPMSVQEKKMRLGQDQFRKELEERISKIPIQNYRNFSIVAHVDHGKSTLSDRLLELTGVIEPGSKSQVLDKLDVERERGITVKAQTVSMLYTEPASGQDYLLHLVDTPGHVDFRAEVSRSYASCGGALLLVDASQGVQAQTVANFFLAYSMDLKLIPIINKIDLDLANIPRAMEQVETTFELDPADCIPVSAKTGLNVEKIIPSIIKNIPAPVGDESRPLKALLVDSWHDPYVGVVMLVHVVDGKLKKGTKLLSAHTNKTYDVKEVGIMYPDRTPMEYIKAGQVAYVIPGMKNPREALVGDTFFQLGKSEGLDPLPGFEEPQPMVFVGAFPSEGKDFSIMDDSIQNLVLNDRSVHLEKETSNALGSGWRLGFLGSLHASVFKERLEKEYGAKIILTAPTVPYKIVFKNGDEKIITNPDEFPDNKMHNLVSHYMEPYVETIMTLPNEYVGTVMQLCLSNRGEQKEVEYLNTGQTLLRYDIPMAQLVEDFFGKLKGCTKGYASLDYEDAGYRKSDIVKMELCVNGEPQDALTTIVHKSIAQAKGKEYVTRFKKFLRYQLFEVAIQARVNNKVIARETIKAKRKDVTQKLHAADISRYKKLLERQKEGKKQMKAVGRINIGNDAYQAFLRRDN</sequence>
<proteinExistence type="inferred from homology"/>
<comment type="function">
    <text evidence="1">Promotes mitochondrial protein synthesis. May act as a fidelity factor of the translation reaction, by catalyzing a one-codon backward translocation of tRNAs on improperly translocated ribosomes. Binds to mitochondrial ribosomes in a GTP-dependent manner.</text>
</comment>
<comment type="catalytic activity">
    <reaction evidence="1">
        <text>GTP + H2O = GDP + phosphate + H(+)</text>
        <dbReference type="Rhea" id="RHEA:19669"/>
        <dbReference type="ChEBI" id="CHEBI:15377"/>
        <dbReference type="ChEBI" id="CHEBI:15378"/>
        <dbReference type="ChEBI" id="CHEBI:37565"/>
        <dbReference type="ChEBI" id="CHEBI:43474"/>
        <dbReference type="ChEBI" id="CHEBI:58189"/>
    </reaction>
</comment>
<comment type="subcellular location">
    <subcellularLocation>
        <location evidence="1">Mitochondrion inner membrane</location>
        <topology evidence="1">Peripheral membrane protein</topology>
        <orientation evidence="1">Matrix side</orientation>
    </subcellularLocation>
</comment>
<comment type="similarity">
    <text evidence="3">Belongs to the TRAFAC class translation factor GTPase superfamily. Classic translation factor GTPase family. LepA subfamily.</text>
</comment>
<gene>
    <name evidence="1" type="primary">GUF1</name>
    <name type="ORF">LELG_01874</name>
</gene>
<protein>
    <recommendedName>
        <fullName evidence="1">Translation factor GUF1, mitochondrial</fullName>
        <ecNumber>3.6.5.-</ecNumber>
    </recommendedName>
    <alternativeName>
        <fullName evidence="1">Elongation factor 4 homolog</fullName>
        <shortName evidence="1">EF-4</shortName>
    </alternativeName>
    <alternativeName>
        <fullName evidence="1">GTPase GUF1</fullName>
    </alternativeName>
    <alternativeName>
        <fullName evidence="1">Ribosomal back-translocase</fullName>
    </alternativeName>
</protein>